<dbReference type="EMBL" id="AC024174">
    <property type="protein sequence ID" value="AAF80138.1"/>
    <property type="status" value="ALT_SEQ"/>
    <property type="molecule type" value="Genomic_DNA"/>
</dbReference>
<dbReference type="EMBL" id="CP002684">
    <property type="protein sequence ID" value="AEE27947.2"/>
    <property type="molecule type" value="Genomic_DNA"/>
</dbReference>
<dbReference type="EMBL" id="CP002684">
    <property type="protein sequence ID" value="AEE27948.2"/>
    <property type="molecule type" value="Genomic_DNA"/>
</dbReference>
<dbReference type="EMBL" id="BX816018">
    <property type="status" value="NOT_ANNOTATED_CDS"/>
    <property type="molecule type" value="mRNA"/>
</dbReference>
<dbReference type="PIR" id="H86196">
    <property type="entry name" value="H86196"/>
</dbReference>
<dbReference type="RefSeq" id="NP_001184921.1">
    <molecule id="P0C7P8-1"/>
    <property type="nucleotide sequence ID" value="NM_001197992.2"/>
</dbReference>
<dbReference type="RefSeq" id="NP_001318931.1">
    <molecule id="P0C7P8-2"/>
    <property type="nucleotide sequence ID" value="NM_001331616.1"/>
</dbReference>
<dbReference type="SMR" id="P0C7P8"/>
<dbReference type="FunCoup" id="P0C7P8">
    <property type="interactions" value="1266"/>
</dbReference>
<dbReference type="STRING" id="3702.P0C7P8"/>
<dbReference type="iPTMnet" id="P0C7P8"/>
<dbReference type="PaxDb" id="3702-AT1G06150.1"/>
<dbReference type="ProteomicsDB" id="238492">
    <molecule id="P0C7P8-1"/>
</dbReference>
<dbReference type="EnsemblPlants" id="AT1G06150.1">
    <molecule id="P0C7P8-1"/>
    <property type="protein sequence ID" value="AT1G06150.1"/>
    <property type="gene ID" value="AT1G06150"/>
</dbReference>
<dbReference type="EnsemblPlants" id="AT1G06150.2">
    <molecule id="P0C7P8-2"/>
    <property type="protein sequence ID" value="AT1G06150.2"/>
    <property type="gene ID" value="AT1G06150"/>
</dbReference>
<dbReference type="GeneID" id="6241227"/>
<dbReference type="Gramene" id="AT1G06150.1">
    <molecule id="P0C7P8-1"/>
    <property type="protein sequence ID" value="AT1G06150.1"/>
    <property type="gene ID" value="AT1G06150"/>
</dbReference>
<dbReference type="Gramene" id="AT1G06150.2">
    <molecule id="P0C7P8-2"/>
    <property type="protein sequence ID" value="AT1G06150.2"/>
    <property type="gene ID" value="AT1G06150"/>
</dbReference>
<dbReference type="KEGG" id="ath:AT1G06150"/>
<dbReference type="Araport" id="AT1G06150"/>
<dbReference type="TAIR" id="AT1G06150">
    <property type="gene designation" value="EMB1444"/>
</dbReference>
<dbReference type="eggNOG" id="KOG4197">
    <property type="taxonomic scope" value="Eukaryota"/>
</dbReference>
<dbReference type="HOGENOM" id="CLU_013463_1_1_1"/>
<dbReference type="InParanoid" id="P0C7P8"/>
<dbReference type="OMA" id="EGWFLSE"/>
<dbReference type="PhylomeDB" id="P0C7P8"/>
<dbReference type="PRO" id="PR:P0C7P8"/>
<dbReference type="Proteomes" id="UP000006548">
    <property type="component" value="Chromosome 1"/>
</dbReference>
<dbReference type="ExpressionAtlas" id="P0C7P8">
    <property type="expression patterns" value="baseline and differential"/>
</dbReference>
<dbReference type="GO" id="GO:0005634">
    <property type="term" value="C:nucleus"/>
    <property type="evidence" value="ECO:0000250"/>
    <property type="project" value="UniProtKB"/>
</dbReference>
<dbReference type="GO" id="GO:0003677">
    <property type="term" value="F:DNA binding"/>
    <property type="evidence" value="ECO:0007669"/>
    <property type="project" value="UniProtKB-KW"/>
</dbReference>
<dbReference type="GO" id="GO:0003700">
    <property type="term" value="F:DNA-binding transcription factor activity"/>
    <property type="evidence" value="ECO:0007669"/>
    <property type="project" value="InterPro"/>
</dbReference>
<dbReference type="GO" id="GO:0046983">
    <property type="term" value="F:protein dimerization activity"/>
    <property type="evidence" value="ECO:0007669"/>
    <property type="project" value="InterPro"/>
</dbReference>
<dbReference type="GO" id="GO:0048364">
    <property type="term" value="P:root development"/>
    <property type="evidence" value="ECO:0000250"/>
    <property type="project" value="UniProtKB"/>
</dbReference>
<dbReference type="CDD" id="cd18915">
    <property type="entry name" value="bHLH_AtLHW_like"/>
    <property type="match status" value="1"/>
</dbReference>
<dbReference type="InterPro" id="IPR011598">
    <property type="entry name" value="bHLH_dom"/>
</dbReference>
<dbReference type="InterPro" id="IPR036638">
    <property type="entry name" value="HLH_DNA-bd_sf"/>
</dbReference>
<dbReference type="InterPro" id="IPR043561">
    <property type="entry name" value="LHW-like"/>
</dbReference>
<dbReference type="InterPro" id="IPR025610">
    <property type="entry name" value="MYC/MYB_N"/>
</dbReference>
<dbReference type="PANTHER" id="PTHR46196">
    <property type="entry name" value="TRANSCRIPTION FACTOR BHLH155-LIKE ISOFORM X1-RELATED"/>
    <property type="match status" value="1"/>
</dbReference>
<dbReference type="PANTHER" id="PTHR46196:SF1">
    <property type="entry name" value="TRANSCRIPTION FACTOR EMB1444-RELATED"/>
    <property type="match status" value="1"/>
</dbReference>
<dbReference type="Pfam" id="PF14215">
    <property type="entry name" value="bHLH-MYC_N"/>
    <property type="match status" value="1"/>
</dbReference>
<dbReference type="Pfam" id="PF23176">
    <property type="entry name" value="bHLH_LHW"/>
    <property type="match status" value="1"/>
</dbReference>
<dbReference type="SUPFAM" id="SSF47459">
    <property type="entry name" value="HLH, helix-loop-helix DNA-binding domain"/>
    <property type="match status" value="1"/>
</dbReference>
<dbReference type="PROSITE" id="PS50888">
    <property type="entry name" value="BHLH"/>
    <property type="match status" value="1"/>
</dbReference>
<reference key="1">
    <citation type="journal article" date="2000" name="Nature">
        <title>Sequence and analysis of chromosome 1 of the plant Arabidopsis thaliana.</title>
        <authorList>
            <person name="Theologis A."/>
            <person name="Ecker J.R."/>
            <person name="Palm C.J."/>
            <person name="Federspiel N.A."/>
            <person name="Kaul S."/>
            <person name="White O."/>
            <person name="Alonso J."/>
            <person name="Altafi H."/>
            <person name="Araujo R."/>
            <person name="Bowman C.L."/>
            <person name="Brooks S.Y."/>
            <person name="Buehler E."/>
            <person name="Chan A."/>
            <person name="Chao Q."/>
            <person name="Chen H."/>
            <person name="Cheuk R.F."/>
            <person name="Chin C.W."/>
            <person name="Chung M.K."/>
            <person name="Conn L."/>
            <person name="Conway A.B."/>
            <person name="Conway A.R."/>
            <person name="Creasy T.H."/>
            <person name="Dewar K."/>
            <person name="Dunn P."/>
            <person name="Etgu P."/>
            <person name="Feldblyum T.V."/>
            <person name="Feng J.-D."/>
            <person name="Fong B."/>
            <person name="Fujii C.Y."/>
            <person name="Gill J.E."/>
            <person name="Goldsmith A.D."/>
            <person name="Haas B."/>
            <person name="Hansen N.F."/>
            <person name="Hughes B."/>
            <person name="Huizar L."/>
            <person name="Hunter J.L."/>
            <person name="Jenkins J."/>
            <person name="Johnson-Hopson C."/>
            <person name="Khan S."/>
            <person name="Khaykin E."/>
            <person name="Kim C.J."/>
            <person name="Koo H.L."/>
            <person name="Kremenetskaia I."/>
            <person name="Kurtz D.B."/>
            <person name="Kwan A."/>
            <person name="Lam B."/>
            <person name="Langin-Hooper S."/>
            <person name="Lee A."/>
            <person name="Lee J.M."/>
            <person name="Lenz C.A."/>
            <person name="Li J.H."/>
            <person name="Li Y.-P."/>
            <person name="Lin X."/>
            <person name="Liu S.X."/>
            <person name="Liu Z.A."/>
            <person name="Luros J.S."/>
            <person name="Maiti R."/>
            <person name="Marziali A."/>
            <person name="Militscher J."/>
            <person name="Miranda M."/>
            <person name="Nguyen M."/>
            <person name="Nierman W.C."/>
            <person name="Osborne B.I."/>
            <person name="Pai G."/>
            <person name="Peterson J."/>
            <person name="Pham P.K."/>
            <person name="Rizzo M."/>
            <person name="Rooney T."/>
            <person name="Rowley D."/>
            <person name="Sakano H."/>
            <person name="Salzberg S.L."/>
            <person name="Schwartz J.R."/>
            <person name="Shinn P."/>
            <person name="Southwick A.M."/>
            <person name="Sun H."/>
            <person name="Tallon L.J."/>
            <person name="Tambunga G."/>
            <person name="Toriumi M.J."/>
            <person name="Town C.D."/>
            <person name="Utterback T."/>
            <person name="Van Aken S."/>
            <person name="Vaysberg M."/>
            <person name="Vysotskaia V.S."/>
            <person name="Walker M."/>
            <person name="Wu D."/>
            <person name="Yu G."/>
            <person name="Fraser C.M."/>
            <person name="Venter J.C."/>
            <person name="Davis R.W."/>
        </authorList>
    </citation>
    <scope>NUCLEOTIDE SEQUENCE [LARGE SCALE GENOMIC DNA]</scope>
    <source>
        <strain>cv. Columbia</strain>
    </source>
</reference>
<reference key="2">
    <citation type="journal article" date="2017" name="Plant J.">
        <title>Araport11: a complete reannotation of the Arabidopsis thaliana reference genome.</title>
        <authorList>
            <person name="Cheng C.Y."/>
            <person name="Krishnakumar V."/>
            <person name="Chan A.P."/>
            <person name="Thibaud-Nissen F."/>
            <person name="Schobel S."/>
            <person name="Town C.D."/>
        </authorList>
    </citation>
    <scope>GENOME REANNOTATION</scope>
    <source>
        <strain>cv. Columbia</strain>
    </source>
</reference>
<reference key="3">
    <citation type="journal article" date="2004" name="Genome Res.">
        <title>Whole genome sequence comparisons and 'full-length' cDNA sequences: a combined approach to evaluate and improve Arabidopsis genome annotation.</title>
        <authorList>
            <person name="Castelli V."/>
            <person name="Aury J.-M."/>
            <person name="Jaillon O."/>
            <person name="Wincker P."/>
            <person name="Clepet C."/>
            <person name="Menard M."/>
            <person name="Cruaud C."/>
            <person name="Quetier F."/>
            <person name="Scarpelli C."/>
            <person name="Schaechter V."/>
            <person name="Temple G."/>
            <person name="Caboche M."/>
            <person name="Weissenbach J."/>
            <person name="Salanoubat M."/>
        </authorList>
    </citation>
    <scope>NUCLEOTIDE SEQUENCE [LARGE SCALE MRNA] OF 571-734 (ISOFORM 1)</scope>
    <source>
        <strain>cv. Columbia</strain>
    </source>
</reference>
<reference key="4">
    <citation type="journal article" date="2003" name="Plant Physiol.">
        <title>A sequence-based map of Arabidopsis genes with mutant phenotypes.</title>
        <authorList>
            <person name="Meinke D.W."/>
            <person name="Meinke L.K."/>
            <person name="Showalter T.C."/>
            <person name="Schissel A.M."/>
            <person name="Mueller L.A."/>
            <person name="Tzafrir I."/>
        </authorList>
    </citation>
    <scope>DISRUPTION PHENOTYPE</scope>
</reference>
<reference key="5">
    <citation type="journal article" date="2007" name="Development">
        <title>Regulation of the Arabidopsis root vascular initial population by LONESOME HIGHWAY.</title>
        <authorList>
            <person name="Ohashi-Ito K."/>
            <person name="Bergmann D.C."/>
        </authorList>
    </citation>
    <scope>GENE FAMILY</scope>
</reference>
<comment type="function">
    <text evidence="1">Transcription factor that may regulate root development.</text>
</comment>
<comment type="subunit">
    <text evidence="1">Homodimer.</text>
</comment>
<comment type="subcellular location">
    <subcellularLocation>
        <location evidence="2">Nucleus</location>
    </subcellularLocation>
</comment>
<comment type="alternative products">
    <event type="alternative splicing"/>
    <isoform>
        <id>P0C7P8-1</id>
        <name>1</name>
        <sequence type="displayed"/>
    </isoform>
    <isoform>
        <id>P0C7P8-2</id>
        <name>2</name>
        <sequence type="described" ref="VSP_058848"/>
    </isoform>
</comment>
<comment type="disruption phenotype">
    <text evidence="4">Pale yellow-green embryos arrested at mature cotyledon steps.</text>
</comment>
<comment type="similarity">
    <text evidence="7">Belongs to the bHLH protein family. LHW subfamily.</text>
</comment>
<comment type="sequence caution" evidence="7">
    <conflict type="erroneous gene model prediction">
        <sequence resource="EMBL-CDS" id="AAF80138"/>
    </conflict>
    <text>The predicted gene has been split into 2 genes: At1g06143 and At1g06150.</text>
</comment>
<comment type="sequence caution" evidence="7">
    <conflict type="miscellaneous discrepancy">
        <sequence resource="EMBL" id="BX816018"/>
    </conflict>
    <text>Sequencing errors.</text>
</comment>
<keyword id="KW-0025">Alternative splicing</keyword>
<keyword id="KW-0217">Developmental protein</keyword>
<keyword id="KW-0238">DNA-binding</keyword>
<keyword id="KW-0539">Nucleus</keyword>
<keyword id="KW-1185">Reference proteome</keyword>
<keyword id="KW-0804">Transcription</keyword>
<keyword id="KW-0805">Transcription regulation</keyword>
<gene>
    <name evidence="5" type="primary">EMB1444</name>
    <name evidence="7" type="synonym">BHLH169</name>
    <name evidence="8" type="ordered locus">At1g06150</name>
    <name evidence="9" type="ORF">T21E18.20</name>
</gene>
<name>LHWL1_ARATH</name>
<sequence length="734" mass="81015">MGYTLQQILRSICSNTDWNYAVFWKLNHHSPMVLTLEDVYCVNHERGLMPESLHGGRHAHDPLGLAVAKMSYHVHSLGEGIVGQVAISGQHQWIFSEYLNDSHSTLQVHNGWESQISAGIKTILIVAVGSCGVVQLGSLCKVEEDPALVTHIRHLFLALTDPLADHASNLMQCDINSPSDRPKIPSKCLHEASPDFSGEFDKAMDMEGLNIVSQNTSNRSNDLPYNFTPTYFHMERTAQVIGGLEAVQPSMFGSNDCVTSGFSVGVVDTKHKNQVDISDMSKVIYDEETGGYRYSRELDPNFQHYSRNHVRNSGGTSALAMESDRLKAGSSYPQLDSTVLTALKTDKDYSRRNEVFQPSESQGSIFVKDTEHRQEEKSESSQLDALTASLCSFSGSELLEALGPAFSKTSTDYGELAKFESAAAIRRTNDMSHSHLTFESSSENLLDAVVASMSNGDGNVRREISSSRSTQSLLTTAEMAQAEPFGHNKQNIVSTVDSVISQPPLADGLIQQNPSNICGAFSSIGFSSTCLSSSSDQFPTSLEIPKKNKKRAKPGESSRPRPRDRQLIQDRIKELRELVPNGSKCSIDSLLECTIKHMLFLQSVSQHADKLTKSASSKMQHKDTGTLGISSTEQGSSWAVEIGGHLQVCSIMVENLDKEGVMLIEMLCEECSHFLEIANVIRSLELIILRGTTEKQGEKTWICFVVEGQNNKVMHRMDILWSLVQIFQPKATNR</sequence>
<accession>P0C7P8</accession>
<accession>Q9LND3</accession>
<organism>
    <name type="scientific">Arabidopsis thaliana</name>
    <name type="common">Mouse-ear cress</name>
    <dbReference type="NCBI Taxonomy" id="3702"/>
    <lineage>
        <taxon>Eukaryota</taxon>
        <taxon>Viridiplantae</taxon>
        <taxon>Streptophyta</taxon>
        <taxon>Embryophyta</taxon>
        <taxon>Tracheophyta</taxon>
        <taxon>Spermatophyta</taxon>
        <taxon>Magnoliopsida</taxon>
        <taxon>eudicotyledons</taxon>
        <taxon>Gunneridae</taxon>
        <taxon>Pentapetalae</taxon>
        <taxon>rosids</taxon>
        <taxon>malvids</taxon>
        <taxon>Brassicales</taxon>
        <taxon>Brassicaceae</taxon>
        <taxon>Camelineae</taxon>
        <taxon>Arabidopsis</taxon>
    </lineage>
</organism>
<proteinExistence type="evidence at transcript level"/>
<evidence type="ECO:0000250" key="1"/>
<evidence type="ECO:0000255" key="2">
    <source>
        <dbReference type="PROSITE-ProRule" id="PRU00981"/>
    </source>
</evidence>
<evidence type="ECO:0000256" key="3">
    <source>
        <dbReference type="SAM" id="MobiDB-lite"/>
    </source>
</evidence>
<evidence type="ECO:0000269" key="4">
    <source>
    </source>
</evidence>
<evidence type="ECO:0000303" key="5">
    <source>
    </source>
</evidence>
<evidence type="ECO:0000303" key="6">
    <source>
    </source>
</evidence>
<evidence type="ECO:0000305" key="7"/>
<evidence type="ECO:0000312" key="8">
    <source>
        <dbReference type="Araport" id="AT1G06150"/>
    </source>
</evidence>
<evidence type="ECO:0000312" key="9">
    <source>
        <dbReference type="EMBL" id="AAF80138.1"/>
    </source>
</evidence>
<feature type="chain" id="PRO_0000342603" description="Transcription factor EMB1444">
    <location>
        <begin position="1"/>
        <end position="734"/>
    </location>
</feature>
<feature type="domain" description="bHLH" evidence="2">
    <location>
        <begin position="552"/>
        <end position="601"/>
    </location>
</feature>
<feature type="region of interest" description="Disordered" evidence="3">
    <location>
        <begin position="537"/>
        <end position="566"/>
    </location>
</feature>
<feature type="short sequence motif" description="Nuclear localization signal" evidence="1">
    <location>
        <begin position="548"/>
        <end position="555"/>
    </location>
</feature>
<feature type="compositionally biased region" description="Basic and acidic residues" evidence="3">
    <location>
        <begin position="553"/>
        <end position="566"/>
    </location>
</feature>
<feature type="splice variant" id="VSP_058848" description="In isoform 2.">
    <original>K</original>
    <variation>KLQ</variation>
    <location>
        <position position="618"/>
    </location>
</feature>
<protein>
    <recommendedName>
        <fullName evidence="5">Transcription factor EMB1444</fullName>
    </recommendedName>
    <alternativeName>
        <fullName evidence="7">Basic helix-loop-helix protein 169</fullName>
        <shortName evidence="7">AtbHLH169</shortName>
        <shortName evidence="7">bHLH 169</shortName>
    </alternativeName>
    <alternativeName>
        <fullName evidence="6">LONESOME HIGHWAY-like protein 1</fullName>
    </alternativeName>
    <alternativeName>
        <fullName evidence="5">Protein EMBRYO DEFECTIVE 1444</fullName>
    </alternativeName>
    <alternativeName>
        <fullName evidence="7">bHLH transcription factor bHLH169</fullName>
    </alternativeName>
</protein>